<dbReference type="EC" id="2.1.1.177" evidence="1"/>
<dbReference type="EMBL" id="CP001488">
    <property type="protein sequence ID" value="ACO01561.1"/>
    <property type="molecule type" value="Genomic_DNA"/>
</dbReference>
<dbReference type="RefSeq" id="WP_004684318.1">
    <property type="nucleotide sequence ID" value="NC_012441.1"/>
</dbReference>
<dbReference type="SMR" id="C0RF89"/>
<dbReference type="GeneID" id="97533039"/>
<dbReference type="KEGG" id="bmi:BMEA_A1890"/>
<dbReference type="HOGENOM" id="CLU_100552_1_1_5"/>
<dbReference type="Proteomes" id="UP000001748">
    <property type="component" value="Chromosome I"/>
</dbReference>
<dbReference type="GO" id="GO:0005737">
    <property type="term" value="C:cytoplasm"/>
    <property type="evidence" value="ECO:0007669"/>
    <property type="project" value="UniProtKB-SubCell"/>
</dbReference>
<dbReference type="GO" id="GO:0070038">
    <property type="term" value="F:rRNA (pseudouridine-N3-)-methyltransferase activity"/>
    <property type="evidence" value="ECO:0007669"/>
    <property type="project" value="UniProtKB-UniRule"/>
</dbReference>
<dbReference type="CDD" id="cd18081">
    <property type="entry name" value="RlmH-like"/>
    <property type="match status" value="1"/>
</dbReference>
<dbReference type="Gene3D" id="3.40.1280.10">
    <property type="match status" value="1"/>
</dbReference>
<dbReference type="HAMAP" id="MF_00658">
    <property type="entry name" value="23SrRNA_methyltr_H"/>
    <property type="match status" value="1"/>
</dbReference>
<dbReference type="InterPro" id="IPR029028">
    <property type="entry name" value="Alpha/beta_knot_MTases"/>
</dbReference>
<dbReference type="InterPro" id="IPR003742">
    <property type="entry name" value="RlmH-like"/>
</dbReference>
<dbReference type="InterPro" id="IPR029026">
    <property type="entry name" value="tRNA_m1G_MTases_N"/>
</dbReference>
<dbReference type="NCBIfam" id="NF000989">
    <property type="entry name" value="PRK00103.2-3"/>
    <property type="match status" value="1"/>
</dbReference>
<dbReference type="PANTHER" id="PTHR33603">
    <property type="entry name" value="METHYLTRANSFERASE"/>
    <property type="match status" value="1"/>
</dbReference>
<dbReference type="PANTHER" id="PTHR33603:SF1">
    <property type="entry name" value="RIBOSOMAL RNA LARGE SUBUNIT METHYLTRANSFERASE H"/>
    <property type="match status" value="1"/>
</dbReference>
<dbReference type="Pfam" id="PF02590">
    <property type="entry name" value="SPOUT_MTase"/>
    <property type="match status" value="1"/>
</dbReference>
<dbReference type="PIRSF" id="PIRSF004505">
    <property type="entry name" value="MT_bac"/>
    <property type="match status" value="1"/>
</dbReference>
<dbReference type="SUPFAM" id="SSF75217">
    <property type="entry name" value="alpha/beta knot"/>
    <property type="match status" value="1"/>
</dbReference>
<evidence type="ECO:0000255" key="1">
    <source>
        <dbReference type="HAMAP-Rule" id="MF_00658"/>
    </source>
</evidence>
<comment type="function">
    <text evidence="1">Specifically methylates the pseudouridine at position 1915 (m3Psi1915) in 23S rRNA.</text>
</comment>
<comment type="catalytic activity">
    <reaction evidence="1">
        <text>pseudouridine(1915) in 23S rRNA + S-adenosyl-L-methionine = N(3)-methylpseudouridine(1915) in 23S rRNA + S-adenosyl-L-homocysteine + H(+)</text>
        <dbReference type="Rhea" id="RHEA:42752"/>
        <dbReference type="Rhea" id="RHEA-COMP:10221"/>
        <dbReference type="Rhea" id="RHEA-COMP:10222"/>
        <dbReference type="ChEBI" id="CHEBI:15378"/>
        <dbReference type="ChEBI" id="CHEBI:57856"/>
        <dbReference type="ChEBI" id="CHEBI:59789"/>
        <dbReference type="ChEBI" id="CHEBI:65314"/>
        <dbReference type="ChEBI" id="CHEBI:74486"/>
        <dbReference type="EC" id="2.1.1.177"/>
    </reaction>
</comment>
<comment type="subunit">
    <text evidence="1">Homodimer.</text>
</comment>
<comment type="subcellular location">
    <subcellularLocation>
        <location evidence="1">Cytoplasm</location>
    </subcellularLocation>
</comment>
<comment type="similarity">
    <text evidence="1">Belongs to the RNA methyltransferase RlmH family.</text>
</comment>
<accession>C0RF89</accession>
<feature type="chain" id="PRO_1000199814" description="Ribosomal RNA large subunit methyltransferase H">
    <location>
        <begin position="1"/>
        <end position="174"/>
    </location>
</feature>
<feature type="binding site" evidence="1">
    <location>
        <position position="90"/>
    </location>
    <ligand>
        <name>S-adenosyl-L-methionine</name>
        <dbReference type="ChEBI" id="CHEBI:59789"/>
    </ligand>
</feature>
<feature type="binding site" evidence="1">
    <location>
        <position position="122"/>
    </location>
    <ligand>
        <name>S-adenosyl-L-methionine</name>
        <dbReference type="ChEBI" id="CHEBI:59789"/>
    </ligand>
</feature>
<feature type="binding site" evidence="1">
    <location>
        <begin position="141"/>
        <end position="146"/>
    </location>
    <ligand>
        <name>S-adenosyl-L-methionine</name>
        <dbReference type="ChEBI" id="CHEBI:59789"/>
    </ligand>
</feature>
<sequence>MRVSVFAVGRMKSGPERELVERYFDRFAKAGPPLGLEFAGVSEIPESRGQTAQLRKAEEAQRIHEALDNAKSGGAKSGGTSSGGAALILLDERGKTLGSEAFAAIVGRMRDDGKRQLIVAIGGPDGHDPALRSRADLVLALGELTWPHQIARILIAEQLYRAATILAGHPYHRS</sequence>
<keyword id="KW-0963">Cytoplasm</keyword>
<keyword id="KW-0489">Methyltransferase</keyword>
<keyword id="KW-0698">rRNA processing</keyword>
<keyword id="KW-0949">S-adenosyl-L-methionine</keyword>
<keyword id="KW-0808">Transferase</keyword>
<gene>
    <name evidence="1" type="primary">rlmH</name>
    <name type="ordered locus">BMEA_A1890</name>
</gene>
<proteinExistence type="inferred from homology"/>
<protein>
    <recommendedName>
        <fullName evidence="1">Ribosomal RNA large subunit methyltransferase H</fullName>
        <ecNumber evidence="1">2.1.1.177</ecNumber>
    </recommendedName>
    <alternativeName>
        <fullName evidence="1">23S rRNA (pseudouridine1915-N3)-methyltransferase</fullName>
    </alternativeName>
    <alternativeName>
        <fullName evidence="1">23S rRNA m3Psi1915 methyltransferase</fullName>
    </alternativeName>
    <alternativeName>
        <fullName evidence="1">rRNA (pseudouridine-N3-)-methyltransferase RlmH</fullName>
    </alternativeName>
</protein>
<name>RLMH_BRUMB</name>
<reference key="1">
    <citation type="submission" date="2009-03" db="EMBL/GenBank/DDBJ databases">
        <title>Brucella melitensis ATCC 23457 whole genome shotgun sequencing project.</title>
        <authorList>
            <person name="Setubal J.C."/>
            <person name="Boyle S."/>
            <person name="Crasta O.R."/>
            <person name="Gillespie J.J."/>
            <person name="Kenyon R.W."/>
            <person name="Lu J."/>
            <person name="Mane S."/>
            <person name="Nagrani S."/>
            <person name="Shallom J.M."/>
            <person name="Shallom S."/>
            <person name="Shukla M."/>
            <person name="Snyder E.E."/>
            <person name="Sobral B.W."/>
            <person name="Wattam A.R."/>
            <person name="Will R."/>
            <person name="Williams K."/>
            <person name="Yoo H."/>
            <person name="Munk C."/>
            <person name="Tapia R."/>
            <person name="Han C."/>
            <person name="Detter J.C."/>
            <person name="Bruce D."/>
            <person name="Brettin T.S."/>
        </authorList>
    </citation>
    <scope>NUCLEOTIDE SEQUENCE [LARGE SCALE GENOMIC DNA]</scope>
    <source>
        <strain>ATCC 23457</strain>
    </source>
</reference>
<organism>
    <name type="scientific">Brucella melitensis biotype 2 (strain ATCC 23457)</name>
    <dbReference type="NCBI Taxonomy" id="546272"/>
    <lineage>
        <taxon>Bacteria</taxon>
        <taxon>Pseudomonadati</taxon>
        <taxon>Pseudomonadota</taxon>
        <taxon>Alphaproteobacteria</taxon>
        <taxon>Hyphomicrobiales</taxon>
        <taxon>Brucellaceae</taxon>
        <taxon>Brucella/Ochrobactrum group</taxon>
        <taxon>Brucella</taxon>
    </lineage>
</organism>